<sequence length="259" mass="29950">MVEKMIDKQLMQKRFSERATTYDRFANVQKKMAHALMKRIVHPPQTILEIGCGTGYLTKLLHDAYPKAELTAVDIAPGMIEKAKQRLGDAPITWLCADIEEAELYEMYDLIISNATFQWLTAPKQTIAKLAKQRNERGQLLFSTFGDRTFHELHTSFAYALAIQQIDEPLRIGPSFPTFSEWLAMHDQARGHEQFEVEYFPSVRDFFLSLRHIGATNSTSGRYCQRPSVFKAMMHEYEQRFSEQGLIRATYHCIFIDIT</sequence>
<name>BIOC_ANOFW</name>
<protein>
    <recommendedName>
        <fullName evidence="1">Malonyl-[acyl-carrier protein] O-methyltransferase</fullName>
        <shortName evidence="1">Malonyl-ACP O-methyltransferase</shortName>
        <ecNumber evidence="1">2.1.1.197</ecNumber>
    </recommendedName>
    <alternativeName>
        <fullName evidence="1">Biotin synthesis protein BioC</fullName>
    </alternativeName>
</protein>
<keyword id="KW-0093">Biotin biosynthesis</keyword>
<keyword id="KW-0489">Methyltransferase</keyword>
<keyword id="KW-0949">S-adenosyl-L-methionine</keyword>
<keyword id="KW-0808">Transferase</keyword>
<proteinExistence type="inferred from homology"/>
<feature type="chain" id="PRO_0000412476" description="Malonyl-[acyl-carrier protein] O-methyltransferase">
    <location>
        <begin position="1"/>
        <end position="259"/>
    </location>
</feature>
<comment type="function">
    <text evidence="1">Converts the free carboxyl group of a malonyl-thioester to its methyl ester by transfer of a methyl group from S-adenosyl-L-methionine (SAM). It allows to synthesize pimeloyl-ACP via the fatty acid synthetic pathway.</text>
</comment>
<comment type="catalytic activity">
    <reaction evidence="1">
        <text>malonyl-[ACP] + S-adenosyl-L-methionine = malonyl-[ACP] methyl ester + S-adenosyl-L-homocysteine</text>
        <dbReference type="Rhea" id="RHEA:17105"/>
        <dbReference type="Rhea" id="RHEA-COMP:9623"/>
        <dbReference type="Rhea" id="RHEA-COMP:9954"/>
        <dbReference type="ChEBI" id="CHEBI:57856"/>
        <dbReference type="ChEBI" id="CHEBI:59789"/>
        <dbReference type="ChEBI" id="CHEBI:78449"/>
        <dbReference type="ChEBI" id="CHEBI:78845"/>
        <dbReference type="EC" id="2.1.1.197"/>
    </reaction>
</comment>
<comment type="pathway">
    <text evidence="1">Cofactor biosynthesis; biotin biosynthesis.</text>
</comment>
<comment type="similarity">
    <text evidence="1">Belongs to the methyltransferase superfamily.</text>
</comment>
<organism>
    <name type="scientific">Anoxybacillus flavithermus (strain DSM 21510 / WK1)</name>
    <dbReference type="NCBI Taxonomy" id="491915"/>
    <lineage>
        <taxon>Bacteria</taxon>
        <taxon>Bacillati</taxon>
        <taxon>Bacillota</taxon>
        <taxon>Bacilli</taxon>
        <taxon>Bacillales</taxon>
        <taxon>Anoxybacillaceae</taxon>
        <taxon>Anoxybacillus</taxon>
    </lineage>
</organism>
<dbReference type="EC" id="2.1.1.197" evidence="1"/>
<dbReference type="EMBL" id="CP000922">
    <property type="protein sequence ID" value="ACJ33541.1"/>
    <property type="molecule type" value="Genomic_DNA"/>
</dbReference>
<dbReference type="SMR" id="B7GHW9"/>
<dbReference type="STRING" id="491915.Aflv_1165"/>
<dbReference type="KEGG" id="afl:Aflv_1165"/>
<dbReference type="eggNOG" id="COG4106">
    <property type="taxonomic scope" value="Bacteria"/>
</dbReference>
<dbReference type="HOGENOM" id="CLU_046586_2_3_9"/>
<dbReference type="UniPathway" id="UPA00078"/>
<dbReference type="Proteomes" id="UP000000742">
    <property type="component" value="Chromosome"/>
</dbReference>
<dbReference type="GO" id="GO:0010340">
    <property type="term" value="F:carboxyl-O-methyltransferase activity"/>
    <property type="evidence" value="ECO:0007669"/>
    <property type="project" value="UniProtKB-UniRule"/>
</dbReference>
<dbReference type="GO" id="GO:0102130">
    <property type="term" value="F:malonyl-CoA methyltransferase activity"/>
    <property type="evidence" value="ECO:0007669"/>
    <property type="project" value="UniProtKB-EC"/>
</dbReference>
<dbReference type="GO" id="GO:0009102">
    <property type="term" value="P:biotin biosynthetic process"/>
    <property type="evidence" value="ECO:0007669"/>
    <property type="project" value="UniProtKB-UniRule"/>
</dbReference>
<dbReference type="GO" id="GO:0032259">
    <property type="term" value="P:methylation"/>
    <property type="evidence" value="ECO:0007669"/>
    <property type="project" value="UniProtKB-KW"/>
</dbReference>
<dbReference type="CDD" id="cd02440">
    <property type="entry name" value="AdoMet_MTases"/>
    <property type="match status" value="1"/>
</dbReference>
<dbReference type="Gene3D" id="3.40.50.150">
    <property type="entry name" value="Vaccinia Virus protein VP39"/>
    <property type="match status" value="1"/>
</dbReference>
<dbReference type="HAMAP" id="MF_00835">
    <property type="entry name" value="BioC"/>
    <property type="match status" value="1"/>
</dbReference>
<dbReference type="InterPro" id="IPR011814">
    <property type="entry name" value="BioC"/>
</dbReference>
<dbReference type="InterPro" id="IPR041698">
    <property type="entry name" value="Methyltransf_25"/>
</dbReference>
<dbReference type="InterPro" id="IPR029063">
    <property type="entry name" value="SAM-dependent_MTases_sf"/>
</dbReference>
<dbReference type="NCBIfam" id="TIGR02072">
    <property type="entry name" value="BioC"/>
    <property type="match status" value="1"/>
</dbReference>
<dbReference type="PANTHER" id="PTHR43861:SF1">
    <property type="entry name" value="TRANS-ACONITATE 2-METHYLTRANSFERASE"/>
    <property type="match status" value="1"/>
</dbReference>
<dbReference type="PANTHER" id="PTHR43861">
    <property type="entry name" value="TRANS-ACONITATE 2-METHYLTRANSFERASE-RELATED"/>
    <property type="match status" value="1"/>
</dbReference>
<dbReference type="Pfam" id="PF13649">
    <property type="entry name" value="Methyltransf_25"/>
    <property type="match status" value="1"/>
</dbReference>
<dbReference type="SUPFAM" id="SSF53335">
    <property type="entry name" value="S-adenosyl-L-methionine-dependent methyltransferases"/>
    <property type="match status" value="1"/>
</dbReference>
<gene>
    <name evidence="1" type="primary">bioC</name>
    <name type="ordered locus">Aflv_1165</name>
</gene>
<accession>B7GHW9</accession>
<evidence type="ECO:0000255" key="1">
    <source>
        <dbReference type="HAMAP-Rule" id="MF_00835"/>
    </source>
</evidence>
<reference key="1">
    <citation type="journal article" date="2008" name="Genome Biol.">
        <title>Encapsulated in silica: genome, proteome and physiology of the thermophilic bacterium Anoxybacillus flavithermus WK1.</title>
        <authorList>
            <person name="Saw J.H."/>
            <person name="Mountain B.W."/>
            <person name="Feng L."/>
            <person name="Omelchenko M.V."/>
            <person name="Hou S."/>
            <person name="Saito J.A."/>
            <person name="Stott M.B."/>
            <person name="Li D."/>
            <person name="Zhao G."/>
            <person name="Wu J."/>
            <person name="Galperin M.Y."/>
            <person name="Koonin E.V."/>
            <person name="Makarova K.S."/>
            <person name="Wolf Y.I."/>
            <person name="Rigden D.J."/>
            <person name="Dunfield P.F."/>
            <person name="Wang L."/>
            <person name="Alam M."/>
        </authorList>
    </citation>
    <scope>NUCLEOTIDE SEQUENCE [LARGE SCALE GENOMIC DNA]</scope>
    <source>
        <strain>DSM 21510 / WK1</strain>
    </source>
</reference>